<sequence>MTPEEIARLPYRPCVGVMLMNGQGEVFVGQRRDNNVAAWQMPQGGVEKGEDPRAAALRELWEETGVNPELAEVVAETEDWLPYDLPYDLVPKLWKGRYRGQEQKWFLMRFHGADSDINIATEHPEFSQWRWLPAADLVENIVPFKRDVYVAVLDAFEAHL</sequence>
<organism>
    <name type="scientific">Roseobacter denitrificans (strain ATCC 33942 / OCh 114)</name>
    <name type="common">Erythrobacter sp. (strain OCh 114)</name>
    <name type="synonym">Roseobacter denitrificans</name>
    <dbReference type="NCBI Taxonomy" id="375451"/>
    <lineage>
        <taxon>Bacteria</taxon>
        <taxon>Pseudomonadati</taxon>
        <taxon>Pseudomonadota</taxon>
        <taxon>Alphaproteobacteria</taxon>
        <taxon>Rhodobacterales</taxon>
        <taxon>Roseobacteraceae</taxon>
        <taxon>Roseobacter</taxon>
    </lineage>
</organism>
<protein>
    <recommendedName>
        <fullName evidence="1">RNA pyrophosphohydrolase</fullName>
        <ecNumber evidence="1">3.6.1.-</ecNumber>
    </recommendedName>
    <alternativeName>
        <fullName evidence="1">(Di)nucleoside polyphosphate hydrolase</fullName>
    </alternativeName>
</protein>
<keyword id="KW-0378">Hydrolase</keyword>
<keyword id="KW-1185">Reference proteome</keyword>
<evidence type="ECO:0000255" key="1">
    <source>
        <dbReference type="HAMAP-Rule" id="MF_00298"/>
    </source>
</evidence>
<reference key="1">
    <citation type="journal article" date="2007" name="J. Bacteriol.">
        <title>The complete genome sequence of Roseobacter denitrificans reveals a mixotrophic rather than photosynthetic metabolism.</title>
        <authorList>
            <person name="Swingley W.D."/>
            <person name="Sadekar S."/>
            <person name="Mastrian S.D."/>
            <person name="Matthies H.J."/>
            <person name="Hao J."/>
            <person name="Ramos H."/>
            <person name="Acharya C.R."/>
            <person name="Conrad A.L."/>
            <person name="Taylor H.L."/>
            <person name="Dejesa L.C."/>
            <person name="Shah M.K."/>
            <person name="O'Huallachain M.E."/>
            <person name="Lince M.T."/>
            <person name="Blankenship R.E."/>
            <person name="Beatty J.T."/>
            <person name="Touchman J.W."/>
        </authorList>
    </citation>
    <scope>NUCLEOTIDE SEQUENCE [LARGE SCALE GENOMIC DNA]</scope>
    <source>
        <strain>ATCC 33942 / OCh 114</strain>
    </source>
</reference>
<name>RPPH_ROSDO</name>
<accession>Q16BL5</accession>
<feature type="chain" id="PRO_1000021990" description="RNA pyrophosphohydrolase">
    <location>
        <begin position="1"/>
        <end position="160"/>
    </location>
</feature>
<feature type="domain" description="Nudix hydrolase" evidence="1">
    <location>
        <begin position="10"/>
        <end position="154"/>
    </location>
</feature>
<feature type="short sequence motif" description="Nudix box">
    <location>
        <begin position="44"/>
        <end position="65"/>
    </location>
</feature>
<comment type="function">
    <text evidence="1">Accelerates the degradation of transcripts by removing pyrophosphate from the 5'-end of triphosphorylated RNA, leading to a more labile monophosphorylated state that can stimulate subsequent ribonuclease cleavage.</text>
</comment>
<comment type="cofactor">
    <cofactor evidence="1">
        <name>a divalent metal cation</name>
        <dbReference type="ChEBI" id="CHEBI:60240"/>
    </cofactor>
</comment>
<comment type="similarity">
    <text evidence="1">Belongs to the Nudix hydrolase family. RppH subfamily.</text>
</comment>
<gene>
    <name evidence="1" type="primary">rppH</name>
    <name evidence="1" type="synonym">nudH</name>
    <name type="ordered locus">RD1_0960</name>
</gene>
<proteinExistence type="inferred from homology"/>
<dbReference type="EC" id="3.6.1.-" evidence="1"/>
<dbReference type="EMBL" id="CP000362">
    <property type="protein sequence ID" value="ABG30628.1"/>
    <property type="molecule type" value="Genomic_DNA"/>
</dbReference>
<dbReference type="RefSeq" id="WP_011567250.1">
    <property type="nucleotide sequence ID" value="NC_008209.1"/>
</dbReference>
<dbReference type="SMR" id="Q16BL5"/>
<dbReference type="STRING" id="375451.RD1_0960"/>
<dbReference type="KEGG" id="rde:RD1_0960"/>
<dbReference type="eggNOG" id="COG1051">
    <property type="taxonomic scope" value="Bacteria"/>
</dbReference>
<dbReference type="HOGENOM" id="CLU_087195_3_0_5"/>
<dbReference type="OrthoDB" id="9816040at2"/>
<dbReference type="Proteomes" id="UP000007029">
    <property type="component" value="Chromosome"/>
</dbReference>
<dbReference type="GO" id="GO:0034432">
    <property type="term" value="F:bis(5'-adenosyl)-pentaphosphatase activity"/>
    <property type="evidence" value="ECO:0007669"/>
    <property type="project" value="TreeGrafter"/>
</dbReference>
<dbReference type="GO" id="GO:0008893">
    <property type="term" value="F:guanosine-3',5'-bis(diphosphate) 3'-diphosphatase activity"/>
    <property type="evidence" value="ECO:0007669"/>
    <property type="project" value="TreeGrafter"/>
</dbReference>
<dbReference type="GO" id="GO:0006753">
    <property type="term" value="P:nucleoside phosphate metabolic process"/>
    <property type="evidence" value="ECO:0007669"/>
    <property type="project" value="TreeGrafter"/>
</dbReference>
<dbReference type="GO" id="GO:0019693">
    <property type="term" value="P:ribose phosphate metabolic process"/>
    <property type="evidence" value="ECO:0007669"/>
    <property type="project" value="TreeGrafter"/>
</dbReference>
<dbReference type="CDD" id="cd03671">
    <property type="entry name" value="NUDIX_Ap4A_hydrolase_plant_like"/>
    <property type="match status" value="1"/>
</dbReference>
<dbReference type="Gene3D" id="3.90.79.10">
    <property type="entry name" value="Nucleoside Triphosphate Pyrophosphohydrolase"/>
    <property type="match status" value="1"/>
</dbReference>
<dbReference type="HAMAP" id="MF_00298">
    <property type="entry name" value="Nudix_RppH"/>
    <property type="match status" value="1"/>
</dbReference>
<dbReference type="InterPro" id="IPR020476">
    <property type="entry name" value="Nudix_hydrolase"/>
</dbReference>
<dbReference type="InterPro" id="IPR015797">
    <property type="entry name" value="NUDIX_hydrolase-like_dom_sf"/>
</dbReference>
<dbReference type="InterPro" id="IPR020084">
    <property type="entry name" value="NUDIX_hydrolase_CS"/>
</dbReference>
<dbReference type="InterPro" id="IPR000086">
    <property type="entry name" value="NUDIX_hydrolase_dom"/>
</dbReference>
<dbReference type="InterPro" id="IPR022927">
    <property type="entry name" value="RppH"/>
</dbReference>
<dbReference type="NCBIfam" id="NF001936">
    <property type="entry name" value="PRK00714.1-3"/>
    <property type="match status" value="1"/>
</dbReference>
<dbReference type="NCBIfam" id="NF001937">
    <property type="entry name" value="PRK00714.1-4"/>
    <property type="match status" value="1"/>
</dbReference>
<dbReference type="NCBIfam" id="NF001938">
    <property type="entry name" value="PRK00714.1-5"/>
    <property type="match status" value="1"/>
</dbReference>
<dbReference type="PANTHER" id="PTHR11839:SF22">
    <property type="entry name" value="NUDIX HYDROLASE 26, CHLOROPLASTIC"/>
    <property type="match status" value="1"/>
</dbReference>
<dbReference type="PANTHER" id="PTHR11839">
    <property type="entry name" value="UDP/ADP-SUGAR PYROPHOSPHATASE"/>
    <property type="match status" value="1"/>
</dbReference>
<dbReference type="Pfam" id="PF00293">
    <property type="entry name" value="NUDIX"/>
    <property type="match status" value="1"/>
</dbReference>
<dbReference type="PRINTS" id="PR00502">
    <property type="entry name" value="NUDIXFAMILY"/>
</dbReference>
<dbReference type="SUPFAM" id="SSF55811">
    <property type="entry name" value="Nudix"/>
    <property type="match status" value="1"/>
</dbReference>
<dbReference type="PROSITE" id="PS51462">
    <property type="entry name" value="NUDIX"/>
    <property type="match status" value="1"/>
</dbReference>
<dbReference type="PROSITE" id="PS00893">
    <property type="entry name" value="NUDIX_BOX"/>
    <property type="match status" value="1"/>
</dbReference>